<sequence length="331" mass="34137">MTTAAALSVLRLGTRRSTLARAQTEEIAGALRAAGCRVEIVGIQSTGDRHADVPLHEFAGSGVFVAELRAALLRGEVDVVVHSMKDLPTAEIPELAIAAIPRRADPRDALVTGAGCRLAELPTGAIVGTGSPRRAAQLRLLRPDLEIRPIRGNLDTRLGKLHAGGYAALIVAAAGLARLHRSEEAAEFFDPTVMLPAPGQGALAVECRRADIADGGRLAGILAGLDDPATRAAVTAERALLAAVGAGCSAPVGALGVVTADTLQLDAVVVDPSGTTAFRRSLTGTPDDASDLGRRLAADLIRAGADQLLQAPKQTGEPHDPDRHDKGTGRP</sequence>
<proteinExistence type="inferred from homology"/>
<comment type="function">
    <text evidence="1">Tetrapolymerization of the monopyrrole PBG into the hydroxymethylbilane pre-uroporphyrinogen in several discrete steps.</text>
</comment>
<comment type="catalytic activity">
    <reaction evidence="1">
        <text>4 porphobilinogen + H2O = hydroxymethylbilane + 4 NH4(+)</text>
        <dbReference type="Rhea" id="RHEA:13185"/>
        <dbReference type="ChEBI" id="CHEBI:15377"/>
        <dbReference type="ChEBI" id="CHEBI:28938"/>
        <dbReference type="ChEBI" id="CHEBI:57845"/>
        <dbReference type="ChEBI" id="CHEBI:58126"/>
        <dbReference type="EC" id="2.5.1.61"/>
    </reaction>
</comment>
<comment type="cofactor">
    <cofactor evidence="1">
        <name>dipyrromethane</name>
        <dbReference type="ChEBI" id="CHEBI:60342"/>
    </cofactor>
    <text evidence="1">Binds 1 dipyrromethane group covalently.</text>
</comment>
<comment type="pathway">
    <text evidence="1">Porphyrin-containing compound metabolism; protoporphyrin-IX biosynthesis; coproporphyrinogen-III from 5-aminolevulinate: step 2/4.</text>
</comment>
<comment type="subunit">
    <text evidence="1">Monomer.</text>
</comment>
<comment type="miscellaneous">
    <text evidence="1">The porphobilinogen subunits are added to the dipyrromethane group.</text>
</comment>
<comment type="similarity">
    <text evidence="1">Belongs to the HMBS family.</text>
</comment>
<feature type="chain" id="PRO_1000125650" description="Porphobilinogen deaminase">
    <location>
        <begin position="1"/>
        <end position="331"/>
    </location>
</feature>
<feature type="region of interest" description="Disordered" evidence="2">
    <location>
        <begin position="307"/>
        <end position="331"/>
    </location>
</feature>
<feature type="compositionally biased region" description="Basic and acidic residues" evidence="2">
    <location>
        <begin position="316"/>
        <end position="331"/>
    </location>
</feature>
<feature type="modified residue" description="S-(dipyrrolylmethanemethyl)cysteine" evidence="1">
    <location>
        <position position="248"/>
    </location>
</feature>
<evidence type="ECO:0000255" key="1">
    <source>
        <dbReference type="HAMAP-Rule" id="MF_00260"/>
    </source>
</evidence>
<evidence type="ECO:0000256" key="2">
    <source>
        <dbReference type="SAM" id="MobiDB-lite"/>
    </source>
</evidence>
<accession>A0LRF1</accession>
<organism>
    <name type="scientific">Acidothermus cellulolyticus (strain ATCC 43068 / DSM 8971 / 11B)</name>
    <dbReference type="NCBI Taxonomy" id="351607"/>
    <lineage>
        <taxon>Bacteria</taxon>
        <taxon>Bacillati</taxon>
        <taxon>Actinomycetota</taxon>
        <taxon>Actinomycetes</taxon>
        <taxon>Acidothermales</taxon>
        <taxon>Acidothermaceae</taxon>
        <taxon>Acidothermus</taxon>
    </lineage>
</organism>
<dbReference type="EC" id="2.5.1.61" evidence="1"/>
<dbReference type="EMBL" id="CP000481">
    <property type="protein sequence ID" value="ABK52011.1"/>
    <property type="molecule type" value="Genomic_DNA"/>
</dbReference>
<dbReference type="RefSeq" id="WP_011719075.1">
    <property type="nucleotide sequence ID" value="NC_008578.1"/>
</dbReference>
<dbReference type="SMR" id="A0LRF1"/>
<dbReference type="FunCoup" id="A0LRF1">
    <property type="interactions" value="385"/>
</dbReference>
<dbReference type="STRING" id="351607.Acel_0237"/>
<dbReference type="KEGG" id="ace:Acel_0237"/>
<dbReference type="eggNOG" id="COG0181">
    <property type="taxonomic scope" value="Bacteria"/>
</dbReference>
<dbReference type="HOGENOM" id="CLU_019704_1_0_11"/>
<dbReference type="InParanoid" id="A0LRF1"/>
<dbReference type="OrthoDB" id="9810298at2"/>
<dbReference type="UniPathway" id="UPA00251">
    <property type="reaction ID" value="UER00319"/>
</dbReference>
<dbReference type="Proteomes" id="UP000008221">
    <property type="component" value="Chromosome"/>
</dbReference>
<dbReference type="GO" id="GO:0005737">
    <property type="term" value="C:cytoplasm"/>
    <property type="evidence" value="ECO:0007669"/>
    <property type="project" value="TreeGrafter"/>
</dbReference>
<dbReference type="GO" id="GO:0004418">
    <property type="term" value="F:hydroxymethylbilane synthase activity"/>
    <property type="evidence" value="ECO:0007669"/>
    <property type="project" value="UniProtKB-UniRule"/>
</dbReference>
<dbReference type="GO" id="GO:0006782">
    <property type="term" value="P:protoporphyrinogen IX biosynthetic process"/>
    <property type="evidence" value="ECO:0007669"/>
    <property type="project" value="UniProtKB-UniRule"/>
</dbReference>
<dbReference type="FunFam" id="3.40.190.10:FF:000005">
    <property type="entry name" value="Porphobilinogen deaminase"/>
    <property type="match status" value="1"/>
</dbReference>
<dbReference type="Gene3D" id="3.40.190.10">
    <property type="entry name" value="Periplasmic binding protein-like II"/>
    <property type="match status" value="2"/>
</dbReference>
<dbReference type="Gene3D" id="3.30.160.40">
    <property type="entry name" value="Porphobilinogen deaminase, C-terminal domain"/>
    <property type="match status" value="1"/>
</dbReference>
<dbReference type="HAMAP" id="MF_00260">
    <property type="entry name" value="Porphobil_deam"/>
    <property type="match status" value="1"/>
</dbReference>
<dbReference type="InterPro" id="IPR000860">
    <property type="entry name" value="HemC"/>
</dbReference>
<dbReference type="InterPro" id="IPR022419">
    <property type="entry name" value="Porphobilin_deaminase_cofac_BS"/>
</dbReference>
<dbReference type="InterPro" id="IPR022417">
    <property type="entry name" value="Porphobilin_deaminase_N"/>
</dbReference>
<dbReference type="InterPro" id="IPR022418">
    <property type="entry name" value="Porphobilinogen_deaminase_C"/>
</dbReference>
<dbReference type="InterPro" id="IPR036803">
    <property type="entry name" value="Porphobilinogen_deaminase_C_sf"/>
</dbReference>
<dbReference type="NCBIfam" id="TIGR00212">
    <property type="entry name" value="hemC"/>
    <property type="match status" value="1"/>
</dbReference>
<dbReference type="PANTHER" id="PTHR11557">
    <property type="entry name" value="PORPHOBILINOGEN DEAMINASE"/>
    <property type="match status" value="1"/>
</dbReference>
<dbReference type="PANTHER" id="PTHR11557:SF0">
    <property type="entry name" value="PORPHOBILINOGEN DEAMINASE"/>
    <property type="match status" value="1"/>
</dbReference>
<dbReference type="Pfam" id="PF01379">
    <property type="entry name" value="Porphobil_deam"/>
    <property type="match status" value="1"/>
</dbReference>
<dbReference type="Pfam" id="PF03900">
    <property type="entry name" value="Porphobil_deamC"/>
    <property type="match status" value="1"/>
</dbReference>
<dbReference type="PIRSF" id="PIRSF001438">
    <property type="entry name" value="4pyrrol_synth_OHMeBilane_synth"/>
    <property type="match status" value="1"/>
</dbReference>
<dbReference type="PRINTS" id="PR00151">
    <property type="entry name" value="PORPHBDMNASE"/>
</dbReference>
<dbReference type="SUPFAM" id="SSF53850">
    <property type="entry name" value="Periplasmic binding protein-like II"/>
    <property type="match status" value="1"/>
</dbReference>
<dbReference type="SUPFAM" id="SSF54782">
    <property type="entry name" value="Porphobilinogen deaminase (hydroxymethylbilane synthase), C-terminal domain"/>
    <property type="match status" value="1"/>
</dbReference>
<dbReference type="PROSITE" id="PS00533">
    <property type="entry name" value="PORPHOBILINOGEN_DEAM"/>
    <property type="match status" value="1"/>
</dbReference>
<keyword id="KW-0627">Porphyrin biosynthesis</keyword>
<keyword id="KW-1185">Reference proteome</keyword>
<keyword id="KW-0808">Transferase</keyword>
<gene>
    <name evidence="1" type="primary">hemC</name>
    <name type="ordered locus">Acel_0237</name>
</gene>
<reference key="1">
    <citation type="journal article" date="2009" name="Genome Res.">
        <title>Complete genome of the cellulolytic thermophile Acidothermus cellulolyticus 11B provides insights into its ecophysiological and evolutionary adaptations.</title>
        <authorList>
            <person name="Barabote R.D."/>
            <person name="Xie G."/>
            <person name="Leu D.H."/>
            <person name="Normand P."/>
            <person name="Necsulea A."/>
            <person name="Daubin V."/>
            <person name="Medigue C."/>
            <person name="Adney W.S."/>
            <person name="Xu X.C."/>
            <person name="Lapidus A."/>
            <person name="Parales R.E."/>
            <person name="Detter C."/>
            <person name="Pujic P."/>
            <person name="Bruce D."/>
            <person name="Lavire C."/>
            <person name="Challacombe J.F."/>
            <person name="Brettin T.S."/>
            <person name="Berry A.M."/>
        </authorList>
    </citation>
    <scope>NUCLEOTIDE SEQUENCE [LARGE SCALE GENOMIC DNA]</scope>
    <source>
        <strain>ATCC 43068 / DSM 8971 / 11B</strain>
    </source>
</reference>
<name>HEM3_ACIC1</name>
<protein>
    <recommendedName>
        <fullName evidence="1">Porphobilinogen deaminase</fullName>
        <shortName evidence="1">PBG</shortName>
        <ecNumber evidence="1">2.5.1.61</ecNumber>
    </recommendedName>
    <alternativeName>
        <fullName evidence="1">Hydroxymethylbilane synthase</fullName>
        <shortName evidence="1">HMBS</shortName>
    </alternativeName>
    <alternativeName>
        <fullName evidence="1">Pre-uroporphyrinogen synthase</fullName>
    </alternativeName>
</protein>